<gene>
    <name type="ordered locus">AF_1102</name>
</gene>
<keyword id="KW-1185">Reference proteome</keyword>
<name>Y1102_ARCFU</name>
<reference key="1">
    <citation type="journal article" date="1997" name="Nature">
        <title>The complete genome sequence of the hyperthermophilic, sulphate-reducing archaeon Archaeoglobus fulgidus.</title>
        <authorList>
            <person name="Klenk H.-P."/>
            <person name="Clayton R.A."/>
            <person name="Tomb J.-F."/>
            <person name="White O."/>
            <person name="Nelson K.E."/>
            <person name="Ketchum K.A."/>
            <person name="Dodson R.J."/>
            <person name="Gwinn M.L."/>
            <person name="Hickey E.K."/>
            <person name="Peterson J.D."/>
            <person name="Richardson D.L."/>
            <person name="Kerlavage A.R."/>
            <person name="Graham D.E."/>
            <person name="Kyrpides N.C."/>
            <person name="Fleischmann R.D."/>
            <person name="Quackenbush J."/>
            <person name="Lee N.H."/>
            <person name="Sutton G.G."/>
            <person name="Gill S.R."/>
            <person name="Kirkness E.F."/>
            <person name="Dougherty B.A."/>
            <person name="McKenney K."/>
            <person name="Adams M.D."/>
            <person name="Loftus B.J."/>
            <person name="Peterson S.N."/>
            <person name="Reich C.I."/>
            <person name="McNeil L.K."/>
            <person name="Badger J.H."/>
            <person name="Glodek A."/>
            <person name="Zhou L."/>
            <person name="Overbeek R."/>
            <person name="Gocayne J.D."/>
            <person name="Weidman J.F."/>
            <person name="McDonald L.A."/>
            <person name="Utterback T.R."/>
            <person name="Cotton M.D."/>
            <person name="Spriggs T."/>
            <person name="Artiach P."/>
            <person name="Kaine B.P."/>
            <person name="Sykes S.M."/>
            <person name="Sadow P.W."/>
            <person name="D'Andrea K.P."/>
            <person name="Bowman C."/>
            <person name="Fujii C."/>
            <person name="Garland S.A."/>
            <person name="Mason T.M."/>
            <person name="Olsen G.J."/>
            <person name="Fraser C.M."/>
            <person name="Smith H.O."/>
            <person name="Woese C.R."/>
            <person name="Venter J.C."/>
        </authorList>
    </citation>
    <scope>NUCLEOTIDE SEQUENCE [LARGE SCALE GENOMIC DNA]</scope>
    <source>
        <strain>ATCC 49558 / DSM 4304 / JCM 9628 / NBRC 100126 / VC-16</strain>
    </source>
</reference>
<dbReference type="EMBL" id="AE000782">
    <property type="protein sequence ID" value="AAB90146.1"/>
    <property type="molecule type" value="Genomic_DNA"/>
</dbReference>
<dbReference type="PIR" id="E69387">
    <property type="entry name" value="E69387"/>
</dbReference>
<dbReference type="SMR" id="O29163"/>
<dbReference type="STRING" id="224325.AF_1102"/>
<dbReference type="PaxDb" id="224325-AF_1102"/>
<dbReference type="EnsemblBacteria" id="AAB90146">
    <property type="protein sequence ID" value="AAB90146"/>
    <property type="gene ID" value="AF_1102"/>
</dbReference>
<dbReference type="KEGG" id="afu:AF_1102"/>
<dbReference type="eggNOG" id="arCOG10392">
    <property type="taxonomic scope" value="Archaea"/>
</dbReference>
<dbReference type="HOGENOM" id="CLU_2645718_0_0_2"/>
<dbReference type="OrthoDB" id="378046at2157"/>
<dbReference type="Proteomes" id="UP000002199">
    <property type="component" value="Chromosome"/>
</dbReference>
<proteinExistence type="predicted"/>
<feature type="chain" id="PRO_0000127964" description="Uncharacterized protein AF_1102">
    <location>
        <begin position="1"/>
        <end position="76"/>
    </location>
</feature>
<accession>O29163</accession>
<sequence length="76" mass="8852">MDEKAKAMLMLGVLNDAFGDIRNMIYYLQDFIYSHPDWAEDFEKLGLNDVLNAARELEKLTLEKMDLLKRIAEGKE</sequence>
<protein>
    <recommendedName>
        <fullName>Uncharacterized protein AF_1102</fullName>
    </recommendedName>
</protein>
<organism>
    <name type="scientific">Archaeoglobus fulgidus (strain ATCC 49558 / DSM 4304 / JCM 9628 / NBRC 100126 / VC-16)</name>
    <dbReference type="NCBI Taxonomy" id="224325"/>
    <lineage>
        <taxon>Archaea</taxon>
        <taxon>Methanobacteriati</taxon>
        <taxon>Methanobacteriota</taxon>
        <taxon>Archaeoglobi</taxon>
        <taxon>Archaeoglobales</taxon>
        <taxon>Archaeoglobaceae</taxon>
        <taxon>Archaeoglobus</taxon>
    </lineage>
</organism>